<keyword id="KW-0244">Early protein</keyword>
<feature type="chain" id="PRO_0000221928" description="Uncharacterized 20.6 kDa early protein">
    <location>
        <begin position="1"/>
        <end position="189"/>
    </location>
</feature>
<sequence>MGVQRCQGPILPWSQRPSQGCFRHGEGVRAWLGACEGALQTHPAGREPLPIGALHVGQVAVYHKFVVERLGRVAFGTELTFGSFMAGRAVDTFEGIQLGREENGFGGVCIRTAGDADGFALHKPGQIRLIRVKNKFSAMFFDAFLTFGFHEFVSTLGDKEAVRVPVDRLYGPVLERSASVLFVEESSPL</sequence>
<dbReference type="EMBL" id="X03000">
    <property type="protein sequence ID" value="CAA26765.1"/>
    <property type="molecule type" value="Genomic_DNA"/>
</dbReference>
<dbReference type="InterPro" id="IPR035249">
    <property type="entry name" value="DUF5441"/>
</dbReference>
<dbReference type="Pfam" id="PF17513">
    <property type="entry name" value="DUF5441"/>
    <property type="match status" value="1"/>
</dbReference>
<reference key="1">
    <citation type="journal article" date="1983" name="Gene">
        <title>The nucleotide sequence of the genes encoded in early region 2b of human adenovirus type 7.</title>
        <authorList>
            <person name="Engler J.A."/>
            <person name="Hoppe M.S."/>
            <person name="van Bree M.P."/>
        </authorList>
    </citation>
    <scope>NUCLEOTIDE SEQUENCE [GENOMIC DNA]</scope>
    <source>
        <strain>Gomen</strain>
    </source>
</reference>
<organism>
    <name type="scientific">Human adenovirus B serotype 7</name>
    <name type="common">HAdV-7</name>
    <name type="synonym">Human adenovirus 7</name>
    <dbReference type="NCBI Taxonomy" id="10519"/>
    <lineage>
        <taxon>Viruses</taxon>
        <taxon>Varidnaviria</taxon>
        <taxon>Bamfordvirae</taxon>
        <taxon>Preplasmiviricota</taxon>
        <taxon>Tectiliviricetes</taxon>
        <taxon>Rowavirales</taxon>
        <taxon>Adenoviridae</taxon>
        <taxon>Mastadenovirus</taxon>
        <taxon>Human mastadenovirus B</taxon>
    </lineage>
</organism>
<proteinExistence type="predicted"/>
<accession>P05665</accession>
<organismHost>
    <name type="scientific">Homo sapiens</name>
    <name type="common">Human</name>
    <dbReference type="NCBI Taxonomy" id="9606"/>
</organismHost>
<name>Y206_ADE07</name>
<protein>
    <recommendedName>
        <fullName>Uncharacterized 20.6 kDa early protein</fullName>
    </recommendedName>
</protein>